<feature type="chain" id="PRO_1000118291" description="Heat-inducible transcription repressor HrcA">
    <location>
        <begin position="1"/>
        <end position="372"/>
    </location>
</feature>
<feature type="region of interest" description="Disordered" evidence="2">
    <location>
        <begin position="296"/>
        <end position="331"/>
    </location>
</feature>
<accession>B7GQV7</accession>
<accession>E8MJI3</accession>
<gene>
    <name evidence="1" type="primary">hrcA</name>
    <name type="ordered locus">Blon_1097</name>
    <name type="ordered locus">BLIJ_1122</name>
</gene>
<protein>
    <recommendedName>
        <fullName evidence="1">Heat-inducible transcription repressor HrcA</fullName>
    </recommendedName>
</protein>
<reference key="1">
    <citation type="journal article" date="2008" name="Proc. Natl. Acad. Sci. U.S.A.">
        <title>The genome sequence of Bifidobacterium longum subsp. infantis reveals adaptations for milk utilization within the infant microbiome.</title>
        <authorList>
            <person name="Sela D.A."/>
            <person name="Chapman J."/>
            <person name="Adeuya A."/>
            <person name="Kim J.H."/>
            <person name="Chen F."/>
            <person name="Whitehead T.R."/>
            <person name="Lapidus A."/>
            <person name="Rokhsar D.S."/>
            <person name="Lebrilla C.B."/>
            <person name="German J.B."/>
            <person name="Price N.P."/>
            <person name="Richardson P.M."/>
            <person name="Mills D.A."/>
        </authorList>
    </citation>
    <scope>NUCLEOTIDE SEQUENCE [LARGE SCALE GENOMIC DNA]</scope>
    <source>
        <strain>ATCC 15697 / DSM 20088 / JCM 1222 / NCTC 11817 / S12</strain>
    </source>
</reference>
<reference key="2">
    <citation type="journal article" date="2011" name="Nature">
        <title>Bifidobacteria can protect from enteropathogenic infection through production of acetate.</title>
        <authorList>
            <person name="Fukuda S."/>
            <person name="Toh H."/>
            <person name="Hase K."/>
            <person name="Oshima K."/>
            <person name="Nakanishi Y."/>
            <person name="Yoshimura K."/>
            <person name="Tobe T."/>
            <person name="Clarke J.M."/>
            <person name="Topping D.L."/>
            <person name="Suzuki T."/>
            <person name="Taylor T.D."/>
            <person name="Itoh K."/>
            <person name="Kikuchi J."/>
            <person name="Morita H."/>
            <person name="Hattori M."/>
            <person name="Ohno H."/>
        </authorList>
    </citation>
    <scope>NUCLEOTIDE SEQUENCE [LARGE SCALE GENOMIC DNA]</scope>
    <source>
        <strain>ATCC 15697 / DSM 20088 / JCM 1222 / NCTC 11817 / S12</strain>
    </source>
</reference>
<keyword id="KW-0678">Repressor</keyword>
<keyword id="KW-0346">Stress response</keyword>
<keyword id="KW-0804">Transcription</keyword>
<keyword id="KW-0805">Transcription regulation</keyword>
<proteinExistence type="inferred from homology"/>
<sequence length="372" mass="39558">MTQSRRMLVLRAVVEDYIRSQEPVGSTSLTRDHDLGVSSATIRNDMAALEDEGYLIQPHTSAGRVPTEKGYRYFVDRLATVVPLSEAQRRGINSFLSGSVSLKDALQRSARLLSEITGQVAVVTSPSLAKATLRHVEMVPVAMTTLLAVVITDTGRVAQHGLTIASMPAVDEINRLSNTVNEQCVGLSLSKSAETVRSIAASAGYESVRGVADALADAFESMALDERANELYMSGTSHLAHSRSLTDLAPLFDALEEQVVLMKLMSNLSEETNASGVGVAIGSEMHTPGLLHASVVSSGYGRSGEAGEPAGNDPVGEPETESETESQTNDMEPIAFVGSIGPTHMDYAATMAAVRAVARYLTAFLSEGRTQD</sequence>
<name>HRCA_BIFLS</name>
<comment type="function">
    <text evidence="1">Negative regulator of class I heat shock genes (grpE-dnaK-dnaJ and groELS operons). Prevents heat-shock induction of these operons.</text>
</comment>
<comment type="similarity">
    <text evidence="1">Belongs to the HrcA family.</text>
</comment>
<dbReference type="EMBL" id="CP001095">
    <property type="protein sequence ID" value="ACJ52187.1"/>
    <property type="molecule type" value="Genomic_DNA"/>
</dbReference>
<dbReference type="EMBL" id="AP010889">
    <property type="protein sequence ID" value="BAJ68710.1"/>
    <property type="molecule type" value="Genomic_DNA"/>
</dbReference>
<dbReference type="RefSeq" id="WP_012577445.1">
    <property type="nucleotide sequence ID" value="NZ_JDTT01000017.1"/>
</dbReference>
<dbReference type="SMR" id="B7GQV7"/>
<dbReference type="KEGG" id="bln:Blon_1097"/>
<dbReference type="KEGG" id="blon:BLIJ_1122"/>
<dbReference type="PATRIC" id="fig|391904.8.peg.1120"/>
<dbReference type="HOGENOM" id="CLU_050019_2_0_11"/>
<dbReference type="Proteomes" id="UP000001360">
    <property type="component" value="Chromosome"/>
</dbReference>
<dbReference type="GO" id="GO:0003677">
    <property type="term" value="F:DNA binding"/>
    <property type="evidence" value="ECO:0007669"/>
    <property type="project" value="InterPro"/>
</dbReference>
<dbReference type="GO" id="GO:0045892">
    <property type="term" value="P:negative regulation of DNA-templated transcription"/>
    <property type="evidence" value="ECO:0007669"/>
    <property type="project" value="UniProtKB-UniRule"/>
</dbReference>
<dbReference type="FunFam" id="1.10.10.10:FF:000049">
    <property type="entry name" value="Heat-inducible transcription repressor HrcA"/>
    <property type="match status" value="1"/>
</dbReference>
<dbReference type="Gene3D" id="3.30.450.40">
    <property type="match status" value="1"/>
</dbReference>
<dbReference type="Gene3D" id="3.30.390.60">
    <property type="entry name" value="Heat-inducible transcription repressor hrca homolog, domain 3"/>
    <property type="match status" value="1"/>
</dbReference>
<dbReference type="Gene3D" id="1.10.10.10">
    <property type="entry name" value="Winged helix-like DNA-binding domain superfamily/Winged helix DNA-binding domain"/>
    <property type="match status" value="1"/>
</dbReference>
<dbReference type="HAMAP" id="MF_00081">
    <property type="entry name" value="HrcA"/>
    <property type="match status" value="1"/>
</dbReference>
<dbReference type="InterPro" id="IPR029016">
    <property type="entry name" value="GAF-like_dom_sf"/>
</dbReference>
<dbReference type="InterPro" id="IPR002571">
    <property type="entry name" value="HrcA"/>
</dbReference>
<dbReference type="InterPro" id="IPR021153">
    <property type="entry name" value="HrcA_C"/>
</dbReference>
<dbReference type="InterPro" id="IPR036388">
    <property type="entry name" value="WH-like_DNA-bd_sf"/>
</dbReference>
<dbReference type="InterPro" id="IPR036390">
    <property type="entry name" value="WH_DNA-bd_sf"/>
</dbReference>
<dbReference type="InterPro" id="IPR023120">
    <property type="entry name" value="WHTH_transcript_rep_HrcA_IDD"/>
</dbReference>
<dbReference type="NCBIfam" id="TIGR00331">
    <property type="entry name" value="hrcA"/>
    <property type="match status" value="1"/>
</dbReference>
<dbReference type="PANTHER" id="PTHR34824">
    <property type="entry name" value="HEAT-INDUCIBLE TRANSCRIPTION REPRESSOR HRCA"/>
    <property type="match status" value="1"/>
</dbReference>
<dbReference type="PANTHER" id="PTHR34824:SF1">
    <property type="entry name" value="HEAT-INDUCIBLE TRANSCRIPTION REPRESSOR HRCA"/>
    <property type="match status" value="1"/>
</dbReference>
<dbReference type="Pfam" id="PF01628">
    <property type="entry name" value="HrcA"/>
    <property type="match status" value="1"/>
</dbReference>
<dbReference type="PIRSF" id="PIRSF005485">
    <property type="entry name" value="HrcA"/>
    <property type="match status" value="1"/>
</dbReference>
<dbReference type="SUPFAM" id="SSF55781">
    <property type="entry name" value="GAF domain-like"/>
    <property type="match status" value="1"/>
</dbReference>
<dbReference type="SUPFAM" id="SSF46785">
    <property type="entry name" value="Winged helix' DNA-binding domain"/>
    <property type="match status" value="1"/>
</dbReference>
<organism>
    <name type="scientific">Bifidobacterium longum subsp. infantis (strain ATCC 15697 / DSM 20088 / JCM 1222 / NCTC 11817 / S12)</name>
    <dbReference type="NCBI Taxonomy" id="391904"/>
    <lineage>
        <taxon>Bacteria</taxon>
        <taxon>Bacillati</taxon>
        <taxon>Actinomycetota</taxon>
        <taxon>Actinomycetes</taxon>
        <taxon>Bifidobacteriales</taxon>
        <taxon>Bifidobacteriaceae</taxon>
        <taxon>Bifidobacterium</taxon>
    </lineage>
</organism>
<evidence type="ECO:0000255" key="1">
    <source>
        <dbReference type="HAMAP-Rule" id="MF_00081"/>
    </source>
</evidence>
<evidence type="ECO:0000256" key="2">
    <source>
        <dbReference type="SAM" id="MobiDB-lite"/>
    </source>
</evidence>